<proteinExistence type="inferred from homology"/>
<reference key="1">
    <citation type="submission" date="2007-08" db="EMBL/GenBank/DDBJ databases">
        <title>Complete sequence of Shewanella sediminis HAW-EB3.</title>
        <authorList>
            <consortium name="US DOE Joint Genome Institute"/>
            <person name="Copeland A."/>
            <person name="Lucas S."/>
            <person name="Lapidus A."/>
            <person name="Barry K."/>
            <person name="Glavina del Rio T."/>
            <person name="Dalin E."/>
            <person name="Tice H."/>
            <person name="Pitluck S."/>
            <person name="Chertkov O."/>
            <person name="Brettin T."/>
            <person name="Bruce D."/>
            <person name="Detter J.C."/>
            <person name="Han C."/>
            <person name="Schmutz J."/>
            <person name="Larimer F."/>
            <person name="Land M."/>
            <person name="Hauser L."/>
            <person name="Kyrpides N."/>
            <person name="Kim E."/>
            <person name="Zhao J.-S."/>
            <person name="Richardson P."/>
        </authorList>
    </citation>
    <scope>NUCLEOTIDE SEQUENCE [LARGE SCALE GENOMIC DNA]</scope>
    <source>
        <strain>HAW-EB3</strain>
    </source>
</reference>
<gene>
    <name evidence="1" type="primary">argH</name>
    <name type="ordered locus">Ssed_4272</name>
</gene>
<comment type="catalytic activity">
    <reaction evidence="1">
        <text>2-(N(omega)-L-arginino)succinate = fumarate + L-arginine</text>
        <dbReference type="Rhea" id="RHEA:24020"/>
        <dbReference type="ChEBI" id="CHEBI:29806"/>
        <dbReference type="ChEBI" id="CHEBI:32682"/>
        <dbReference type="ChEBI" id="CHEBI:57472"/>
        <dbReference type="EC" id="4.3.2.1"/>
    </reaction>
</comment>
<comment type="pathway">
    <text evidence="1">Amino-acid biosynthesis; L-arginine biosynthesis; L-arginine from L-ornithine and carbamoyl phosphate: step 3/3.</text>
</comment>
<comment type="subcellular location">
    <subcellularLocation>
        <location evidence="1">Cytoplasm</location>
    </subcellularLocation>
</comment>
<comment type="similarity">
    <text evidence="1">Belongs to the lyase 1 family. Argininosuccinate lyase subfamily.</text>
</comment>
<dbReference type="EC" id="4.3.2.1" evidence="1"/>
<dbReference type="EMBL" id="CP000821">
    <property type="protein sequence ID" value="ABV38876.1"/>
    <property type="molecule type" value="Genomic_DNA"/>
</dbReference>
<dbReference type="RefSeq" id="WP_012144605.1">
    <property type="nucleotide sequence ID" value="NC_009831.1"/>
</dbReference>
<dbReference type="SMR" id="A8G1A3"/>
<dbReference type="STRING" id="425104.Ssed_4272"/>
<dbReference type="KEGG" id="sse:Ssed_4272"/>
<dbReference type="eggNOG" id="COG0165">
    <property type="taxonomic scope" value="Bacteria"/>
</dbReference>
<dbReference type="HOGENOM" id="CLU_027272_2_3_6"/>
<dbReference type="OrthoDB" id="9769623at2"/>
<dbReference type="UniPathway" id="UPA00068">
    <property type="reaction ID" value="UER00114"/>
</dbReference>
<dbReference type="Proteomes" id="UP000002015">
    <property type="component" value="Chromosome"/>
</dbReference>
<dbReference type="GO" id="GO:0005829">
    <property type="term" value="C:cytosol"/>
    <property type="evidence" value="ECO:0007669"/>
    <property type="project" value="TreeGrafter"/>
</dbReference>
<dbReference type="GO" id="GO:0004056">
    <property type="term" value="F:argininosuccinate lyase activity"/>
    <property type="evidence" value="ECO:0007669"/>
    <property type="project" value="UniProtKB-UniRule"/>
</dbReference>
<dbReference type="GO" id="GO:0042450">
    <property type="term" value="P:arginine biosynthetic process via ornithine"/>
    <property type="evidence" value="ECO:0007669"/>
    <property type="project" value="InterPro"/>
</dbReference>
<dbReference type="GO" id="GO:0006526">
    <property type="term" value="P:L-arginine biosynthetic process"/>
    <property type="evidence" value="ECO:0007669"/>
    <property type="project" value="UniProtKB-UniRule"/>
</dbReference>
<dbReference type="CDD" id="cd01359">
    <property type="entry name" value="Argininosuccinate_lyase"/>
    <property type="match status" value="1"/>
</dbReference>
<dbReference type="FunFam" id="1.10.40.30:FF:000001">
    <property type="entry name" value="Argininosuccinate lyase"/>
    <property type="match status" value="1"/>
</dbReference>
<dbReference type="FunFam" id="1.20.200.10:FF:000006">
    <property type="entry name" value="Argininosuccinate lyase"/>
    <property type="match status" value="1"/>
</dbReference>
<dbReference type="Gene3D" id="1.10.40.30">
    <property type="entry name" value="Fumarase/aspartase (C-terminal domain)"/>
    <property type="match status" value="1"/>
</dbReference>
<dbReference type="Gene3D" id="1.20.200.10">
    <property type="entry name" value="Fumarase/aspartase (Central domain)"/>
    <property type="match status" value="1"/>
</dbReference>
<dbReference type="Gene3D" id="1.10.275.10">
    <property type="entry name" value="Fumarase/aspartase (N-terminal domain)"/>
    <property type="match status" value="1"/>
</dbReference>
<dbReference type="HAMAP" id="MF_00006">
    <property type="entry name" value="Arg_succ_lyase"/>
    <property type="match status" value="1"/>
</dbReference>
<dbReference type="InterPro" id="IPR029419">
    <property type="entry name" value="Arg_succ_lyase_C"/>
</dbReference>
<dbReference type="InterPro" id="IPR009049">
    <property type="entry name" value="Argininosuccinate_lyase"/>
</dbReference>
<dbReference type="InterPro" id="IPR024083">
    <property type="entry name" value="Fumarase/histidase_N"/>
</dbReference>
<dbReference type="InterPro" id="IPR020557">
    <property type="entry name" value="Fumarate_lyase_CS"/>
</dbReference>
<dbReference type="InterPro" id="IPR000362">
    <property type="entry name" value="Fumarate_lyase_fam"/>
</dbReference>
<dbReference type="InterPro" id="IPR022761">
    <property type="entry name" value="Fumarate_lyase_N"/>
</dbReference>
<dbReference type="InterPro" id="IPR008948">
    <property type="entry name" value="L-Aspartase-like"/>
</dbReference>
<dbReference type="NCBIfam" id="TIGR00838">
    <property type="entry name" value="argH"/>
    <property type="match status" value="1"/>
</dbReference>
<dbReference type="NCBIfam" id="NF008964">
    <property type="entry name" value="PRK12308.1"/>
    <property type="match status" value="1"/>
</dbReference>
<dbReference type="PANTHER" id="PTHR43814">
    <property type="entry name" value="ARGININOSUCCINATE LYASE"/>
    <property type="match status" value="1"/>
</dbReference>
<dbReference type="PANTHER" id="PTHR43814:SF1">
    <property type="entry name" value="ARGININOSUCCINATE LYASE"/>
    <property type="match status" value="1"/>
</dbReference>
<dbReference type="Pfam" id="PF14698">
    <property type="entry name" value="ASL_C2"/>
    <property type="match status" value="1"/>
</dbReference>
<dbReference type="Pfam" id="PF00206">
    <property type="entry name" value="Lyase_1"/>
    <property type="match status" value="1"/>
</dbReference>
<dbReference type="PRINTS" id="PR00145">
    <property type="entry name" value="ARGSUCLYASE"/>
</dbReference>
<dbReference type="PRINTS" id="PR00149">
    <property type="entry name" value="FUMRATELYASE"/>
</dbReference>
<dbReference type="SUPFAM" id="SSF48557">
    <property type="entry name" value="L-aspartase-like"/>
    <property type="match status" value="1"/>
</dbReference>
<dbReference type="PROSITE" id="PS00163">
    <property type="entry name" value="FUMARATE_LYASES"/>
    <property type="match status" value="1"/>
</dbReference>
<sequence>MALWGGRFSQESSALFKLFNDSLPVDYRLVEQDIVGSIAWAGAITQVGILSEAECQQLQQALKELLGEVEEKPELILASGAEDIHSFVELSLIAKVGDLGKKLHTGRSRNDQVATDLKLWCKKEGQQQLLLLKALRQALLELAERELDAVMPGYTHLQRAQPVAFGHWCLAYVEMFERDISRLEDALKRADTCPLGTGALAGTAYPMDRYKLAESLGFASPTLNSLDTVSDRDHVVEICSDASISMMHLSRMAEDLIFFNSGEAGFIDLDDEVTSGSSLMPQKKNPDALELIRGKTGRVYGSLIGILTTMKALPLAYNKDMQEDKEGLFDVMDSWAICLEMAALVLSGLKVNRENTLSAAQQGYANSTELADYLVAKGMPFREAHHVVGEVVVKAIAQKKPLEDFELKDLQSFSEIITSDVYDCLTIESCLEKREALGGTALPQVRAALATKLAASE</sequence>
<keyword id="KW-0028">Amino-acid biosynthesis</keyword>
<keyword id="KW-0055">Arginine biosynthesis</keyword>
<keyword id="KW-0963">Cytoplasm</keyword>
<keyword id="KW-0456">Lyase</keyword>
<keyword id="KW-1185">Reference proteome</keyword>
<feature type="chain" id="PRO_1000073860" description="Argininosuccinate lyase">
    <location>
        <begin position="1"/>
        <end position="457"/>
    </location>
</feature>
<organism>
    <name type="scientific">Shewanella sediminis (strain HAW-EB3)</name>
    <dbReference type="NCBI Taxonomy" id="425104"/>
    <lineage>
        <taxon>Bacteria</taxon>
        <taxon>Pseudomonadati</taxon>
        <taxon>Pseudomonadota</taxon>
        <taxon>Gammaproteobacteria</taxon>
        <taxon>Alteromonadales</taxon>
        <taxon>Shewanellaceae</taxon>
        <taxon>Shewanella</taxon>
    </lineage>
</organism>
<protein>
    <recommendedName>
        <fullName evidence="1">Argininosuccinate lyase</fullName>
        <shortName evidence="1">ASAL</shortName>
        <ecNumber evidence="1">4.3.2.1</ecNumber>
    </recommendedName>
    <alternativeName>
        <fullName evidence="1">Arginosuccinase</fullName>
    </alternativeName>
</protein>
<name>ARLY_SHESH</name>
<accession>A8G1A3</accession>
<evidence type="ECO:0000255" key="1">
    <source>
        <dbReference type="HAMAP-Rule" id="MF_00006"/>
    </source>
</evidence>